<proteinExistence type="inferred from homology"/>
<reference key="1">
    <citation type="journal article" date="2004" name="Nature">
        <title>Genome evolution in yeasts.</title>
        <authorList>
            <person name="Dujon B."/>
            <person name="Sherman D."/>
            <person name="Fischer G."/>
            <person name="Durrens P."/>
            <person name="Casaregola S."/>
            <person name="Lafontaine I."/>
            <person name="de Montigny J."/>
            <person name="Marck C."/>
            <person name="Neuveglise C."/>
            <person name="Talla E."/>
            <person name="Goffard N."/>
            <person name="Frangeul L."/>
            <person name="Aigle M."/>
            <person name="Anthouard V."/>
            <person name="Babour A."/>
            <person name="Barbe V."/>
            <person name="Barnay S."/>
            <person name="Blanchin S."/>
            <person name="Beckerich J.-M."/>
            <person name="Beyne E."/>
            <person name="Bleykasten C."/>
            <person name="Boisrame A."/>
            <person name="Boyer J."/>
            <person name="Cattolico L."/>
            <person name="Confanioleri F."/>
            <person name="de Daruvar A."/>
            <person name="Despons L."/>
            <person name="Fabre E."/>
            <person name="Fairhead C."/>
            <person name="Ferry-Dumazet H."/>
            <person name="Groppi A."/>
            <person name="Hantraye F."/>
            <person name="Hennequin C."/>
            <person name="Jauniaux N."/>
            <person name="Joyet P."/>
            <person name="Kachouri R."/>
            <person name="Kerrest A."/>
            <person name="Koszul R."/>
            <person name="Lemaire M."/>
            <person name="Lesur I."/>
            <person name="Ma L."/>
            <person name="Muller H."/>
            <person name="Nicaud J.-M."/>
            <person name="Nikolski M."/>
            <person name="Oztas S."/>
            <person name="Ozier-Kalogeropoulos O."/>
            <person name="Pellenz S."/>
            <person name="Potier S."/>
            <person name="Richard G.-F."/>
            <person name="Straub M.-L."/>
            <person name="Suleau A."/>
            <person name="Swennen D."/>
            <person name="Tekaia F."/>
            <person name="Wesolowski-Louvel M."/>
            <person name="Westhof E."/>
            <person name="Wirth B."/>
            <person name="Zeniou-Meyer M."/>
            <person name="Zivanovic Y."/>
            <person name="Bolotin-Fukuhara M."/>
            <person name="Thierry A."/>
            <person name="Bouchier C."/>
            <person name="Caudron B."/>
            <person name="Scarpelli C."/>
            <person name="Gaillardin C."/>
            <person name="Weissenbach J."/>
            <person name="Wincker P."/>
            <person name="Souciet J.-L."/>
        </authorList>
    </citation>
    <scope>NUCLEOTIDE SEQUENCE [LARGE SCALE GENOMIC DNA]</scope>
    <source>
        <strain>ATCC 2001 / BCRC 20586 / JCM 3761 / NBRC 0622 / NRRL Y-65 / CBS 138</strain>
    </source>
</reference>
<protein>
    <recommendedName>
        <fullName>ATP-dependent RNA helicase DBP8</fullName>
        <ecNumber>3.6.4.13</ecNumber>
    </recommendedName>
</protein>
<keyword id="KW-0067">ATP-binding</keyword>
<keyword id="KW-0347">Helicase</keyword>
<keyword id="KW-0378">Hydrolase</keyword>
<keyword id="KW-0547">Nucleotide-binding</keyword>
<keyword id="KW-0539">Nucleus</keyword>
<keyword id="KW-1185">Reference proteome</keyword>
<keyword id="KW-0690">Ribosome biogenesis</keyword>
<keyword id="KW-0694">RNA-binding</keyword>
<keyword id="KW-0698">rRNA processing</keyword>
<evidence type="ECO:0000250" key="1"/>
<evidence type="ECO:0000255" key="2">
    <source>
        <dbReference type="PROSITE-ProRule" id="PRU00541"/>
    </source>
</evidence>
<evidence type="ECO:0000255" key="3">
    <source>
        <dbReference type="PROSITE-ProRule" id="PRU00542"/>
    </source>
</evidence>
<evidence type="ECO:0000256" key="4">
    <source>
        <dbReference type="SAM" id="MobiDB-lite"/>
    </source>
</evidence>
<evidence type="ECO:0000305" key="5"/>
<comment type="function">
    <text evidence="1">ATP-binding RNA helicase involved in 40S ribosomal subunit biogenesis and is required for the normal formation of 18S rRNAs through pre-rRNA processing at A0, A1 and A2 sites. Required for vegetative growth (By similarity).</text>
</comment>
<comment type="catalytic activity">
    <reaction>
        <text>ATP + H2O = ADP + phosphate + H(+)</text>
        <dbReference type="Rhea" id="RHEA:13065"/>
        <dbReference type="ChEBI" id="CHEBI:15377"/>
        <dbReference type="ChEBI" id="CHEBI:15378"/>
        <dbReference type="ChEBI" id="CHEBI:30616"/>
        <dbReference type="ChEBI" id="CHEBI:43474"/>
        <dbReference type="ChEBI" id="CHEBI:456216"/>
        <dbReference type="EC" id="3.6.4.13"/>
    </reaction>
</comment>
<comment type="subcellular location">
    <subcellularLocation>
        <location evidence="1">Nucleus</location>
        <location evidence="1">Nucleolus</location>
    </subcellularLocation>
</comment>
<comment type="domain">
    <text>The Q motif is unique to and characteristic of the DEAD box family of RNA helicases and controls ATP binding and hydrolysis.</text>
</comment>
<comment type="similarity">
    <text evidence="5">Belongs to the DEAD box helicase family. DDX49/DBP8 subfamily.</text>
</comment>
<organism>
    <name type="scientific">Candida glabrata (strain ATCC 2001 / BCRC 20586 / JCM 3761 / NBRC 0622 / NRRL Y-65 / CBS 138)</name>
    <name type="common">Yeast</name>
    <name type="synonym">Nakaseomyces glabratus</name>
    <dbReference type="NCBI Taxonomy" id="284593"/>
    <lineage>
        <taxon>Eukaryota</taxon>
        <taxon>Fungi</taxon>
        <taxon>Dikarya</taxon>
        <taxon>Ascomycota</taxon>
        <taxon>Saccharomycotina</taxon>
        <taxon>Saccharomycetes</taxon>
        <taxon>Saccharomycetales</taxon>
        <taxon>Saccharomycetaceae</taxon>
        <taxon>Nakaseomyces</taxon>
    </lineage>
</organism>
<accession>Q6FQZ0</accession>
<feature type="chain" id="PRO_0000232284" description="ATP-dependent RNA helicase DBP8">
    <location>
        <begin position="1"/>
        <end position="437"/>
    </location>
</feature>
<feature type="domain" description="Helicase ATP-binding" evidence="2">
    <location>
        <begin position="40"/>
        <end position="216"/>
    </location>
</feature>
<feature type="domain" description="Helicase C-terminal" evidence="3">
    <location>
        <begin position="249"/>
        <end position="396"/>
    </location>
</feature>
<feature type="region of interest" description="Disordered" evidence="4">
    <location>
        <begin position="417"/>
        <end position="437"/>
    </location>
</feature>
<feature type="short sequence motif" description="Q motif">
    <location>
        <begin position="9"/>
        <end position="37"/>
    </location>
</feature>
<feature type="short sequence motif" description="DEAD box">
    <location>
        <begin position="162"/>
        <end position="165"/>
    </location>
</feature>
<feature type="binding site" evidence="2">
    <location>
        <begin position="53"/>
        <end position="60"/>
    </location>
    <ligand>
        <name>ATP</name>
        <dbReference type="ChEBI" id="CHEBI:30616"/>
    </ligand>
</feature>
<name>DBP8_CANGA</name>
<sequence length="437" mass="48676">MTEEVSRKQNFRQLGLSKWLVESLDAMRIRTPTAIQSGCIPEILKGRDCIGGAKTGSGKTIAFAGPMLTQWSEDPTGMFGIVLTPTRELAMQIAEQFTALGSYMNIRVALVVGGESIVDQALQLQRKPHFIIATPGRLAHHILNSGDDTVGGLKRVKYLVLDEADILLTETFSNDLKTCVGALPPKEKRQTLLFTATITDQVRALQDAPVQKGKQPLFCYEVENVDNVAIPSTLNTEYVLVPEHVKEAYLYQLLTCESYANSTAIIFVNRTTAAEVLRRTLKALDVRVASLHSQMPQQERTNSMHRFRANAARVLIATDVASRGLDIPTVELVINYDIPSDPDTFIHRSGRTARAGRKGDAISFITQRDVSRIEAIEARINMKMTECDKVHDTAVIRKALTKVSKAKREALMAMEKENFGERRKLQKRKTQKDGKRV</sequence>
<gene>
    <name type="primary">DBP8</name>
    <name type="ordered locus">CAGL0I02354g</name>
</gene>
<dbReference type="EC" id="3.6.4.13"/>
<dbReference type="EMBL" id="CR380955">
    <property type="protein sequence ID" value="CAG60291.1"/>
    <property type="molecule type" value="Genomic_DNA"/>
</dbReference>
<dbReference type="RefSeq" id="XP_447354.1">
    <property type="nucleotide sequence ID" value="XM_447354.1"/>
</dbReference>
<dbReference type="SMR" id="Q6FQZ0"/>
<dbReference type="FunCoup" id="Q6FQZ0">
    <property type="interactions" value="948"/>
</dbReference>
<dbReference type="STRING" id="284593.Q6FQZ0"/>
<dbReference type="EnsemblFungi" id="CAGL0I02354g-T">
    <property type="protein sequence ID" value="CAGL0I02354g-T-p1"/>
    <property type="gene ID" value="CAGL0I02354g"/>
</dbReference>
<dbReference type="KEGG" id="cgr:2889378"/>
<dbReference type="CGD" id="CAL0132148">
    <property type="gene designation" value="CAGL0I02354g"/>
</dbReference>
<dbReference type="VEuPathDB" id="FungiDB:B1J91_I02354g"/>
<dbReference type="VEuPathDB" id="FungiDB:CAGL0I02354g"/>
<dbReference type="eggNOG" id="KOG0340">
    <property type="taxonomic scope" value="Eukaryota"/>
</dbReference>
<dbReference type="HOGENOM" id="CLU_003041_1_1_1"/>
<dbReference type="InParanoid" id="Q6FQZ0"/>
<dbReference type="OMA" id="IMIFTDT"/>
<dbReference type="Proteomes" id="UP000002428">
    <property type="component" value="Chromosome I"/>
</dbReference>
<dbReference type="GO" id="GO:0005829">
    <property type="term" value="C:cytosol"/>
    <property type="evidence" value="ECO:0007669"/>
    <property type="project" value="TreeGrafter"/>
</dbReference>
<dbReference type="GO" id="GO:0005730">
    <property type="term" value="C:nucleolus"/>
    <property type="evidence" value="ECO:0007669"/>
    <property type="project" value="UniProtKB-SubCell"/>
</dbReference>
<dbReference type="GO" id="GO:0032040">
    <property type="term" value="C:small-subunit processome"/>
    <property type="evidence" value="ECO:0007669"/>
    <property type="project" value="EnsemblFungi"/>
</dbReference>
<dbReference type="GO" id="GO:0005524">
    <property type="term" value="F:ATP binding"/>
    <property type="evidence" value="ECO:0007669"/>
    <property type="project" value="UniProtKB-KW"/>
</dbReference>
<dbReference type="GO" id="GO:0016887">
    <property type="term" value="F:ATP hydrolysis activity"/>
    <property type="evidence" value="ECO:0007669"/>
    <property type="project" value="EnsemblFungi"/>
</dbReference>
<dbReference type="GO" id="GO:0003723">
    <property type="term" value="F:RNA binding"/>
    <property type="evidence" value="ECO:0007669"/>
    <property type="project" value="UniProtKB-KW"/>
</dbReference>
<dbReference type="GO" id="GO:0003724">
    <property type="term" value="F:RNA helicase activity"/>
    <property type="evidence" value="ECO:0007669"/>
    <property type="project" value="UniProtKB-EC"/>
</dbReference>
<dbReference type="GO" id="GO:0000480">
    <property type="term" value="P:endonucleolytic cleavage in 5'-ETS of tricistronic rRNA transcript (SSU-rRNA, 5.8S rRNA, LSU-rRNA)"/>
    <property type="evidence" value="ECO:0007669"/>
    <property type="project" value="EnsemblFungi"/>
</dbReference>
<dbReference type="GO" id="GO:0000447">
    <property type="term" value="P:endonucleolytic cleavage in ITS1 to separate SSU-rRNA from 5.8S rRNA and LSU-rRNA from tricistronic rRNA transcript (SSU-rRNA, 5.8S rRNA, LSU-rRNA)"/>
    <property type="evidence" value="ECO:0007669"/>
    <property type="project" value="EnsemblFungi"/>
</dbReference>
<dbReference type="GO" id="GO:0000472">
    <property type="term" value="P:endonucleolytic cleavage to generate mature 5'-end of SSU-rRNA from (SSU-rRNA, 5.8S rRNA, LSU-rRNA)"/>
    <property type="evidence" value="ECO:0007669"/>
    <property type="project" value="EnsemblFungi"/>
</dbReference>
<dbReference type="CDD" id="cd17955">
    <property type="entry name" value="DEADc_DDX49"/>
    <property type="match status" value="1"/>
</dbReference>
<dbReference type="CDD" id="cd18787">
    <property type="entry name" value="SF2_C_DEAD"/>
    <property type="match status" value="1"/>
</dbReference>
<dbReference type="Gene3D" id="3.40.50.300">
    <property type="entry name" value="P-loop containing nucleotide triphosphate hydrolases"/>
    <property type="match status" value="2"/>
</dbReference>
<dbReference type="InterPro" id="IPR011545">
    <property type="entry name" value="DEAD/DEAH_box_helicase_dom"/>
</dbReference>
<dbReference type="InterPro" id="IPR050079">
    <property type="entry name" value="DEAD_box_RNA_helicase"/>
</dbReference>
<dbReference type="InterPro" id="IPR014001">
    <property type="entry name" value="Helicase_ATP-bd"/>
</dbReference>
<dbReference type="InterPro" id="IPR001650">
    <property type="entry name" value="Helicase_C-like"/>
</dbReference>
<dbReference type="InterPro" id="IPR027417">
    <property type="entry name" value="P-loop_NTPase"/>
</dbReference>
<dbReference type="InterPro" id="IPR014014">
    <property type="entry name" value="RNA_helicase_DEAD_Q_motif"/>
</dbReference>
<dbReference type="PANTHER" id="PTHR47959:SF24">
    <property type="entry name" value="ATP-DEPENDENT RNA HELICASE"/>
    <property type="match status" value="1"/>
</dbReference>
<dbReference type="PANTHER" id="PTHR47959">
    <property type="entry name" value="ATP-DEPENDENT RNA HELICASE RHLE-RELATED"/>
    <property type="match status" value="1"/>
</dbReference>
<dbReference type="Pfam" id="PF00270">
    <property type="entry name" value="DEAD"/>
    <property type="match status" value="1"/>
</dbReference>
<dbReference type="Pfam" id="PF00271">
    <property type="entry name" value="Helicase_C"/>
    <property type="match status" value="1"/>
</dbReference>
<dbReference type="SMART" id="SM00487">
    <property type="entry name" value="DEXDc"/>
    <property type="match status" value="1"/>
</dbReference>
<dbReference type="SMART" id="SM00490">
    <property type="entry name" value="HELICc"/>
    <property type="match status" value="1"/>
</dbReference>
<dbReference type="SUPFAM" id="SSF52540">
    <property type="entry name" value="P-loop containing nucleoside triphosphate hydrolases"/>
    <property type="match status" value="1"/>
</dbReference>
<dbReference type="PROSITE" id="PS51192">
    <property type="entry name" value="HELICASE_ATP_BIND_1"/>
    <property type="match status" value="1"/>
</dbReference>
<dbReference type="PROSITE" id="PS51194">
    <property type="entry name" value="HELICASE_CTER"/>
    <property type="match status" value="1"/>
</dbReference>
<dbReference type="PROSITE" id="PS51195">
    <property type="entry name" value="Q_MOTIF"/>
    <property type="match status" value="1"/>
</dbReference>